<organism>
    <name type="scientific">Oryza sativa subsp. indica</name>
    <name type="common">Rice</name>
    <dbReference type="NCBI Taxonomy" id="39946"/>
    <lineage>
        <taxon>Eukaryota</taxon>
        <taxon>Viridiplantae</taxon>
        <taxon>Streptophyta</taxon>
        <taxon>Embryophyta</taxon>
        <taxon>Tracheophyta</taxon>
        <taxon>Spermatophyta</taxon>
        <taxon>Magnoliopsida</taxon>
        <taxon>Liliopsida</taxon>
        <taxon>Poales</taxon>
        <taxon>Poaceae</taxon>
        <taxon>BOP clade</taxon>
        <taxon>Oryzoideae</taxon>
        <taxon>Oryzeae</taxon>
        <taxon>Oryzinae</taxon>
        <taxon>Oryza</taxon>
        <taxon>Oryza sativa</taxon>
    </lineage>
</organism>
<comment type="function">
    <text evidence="1">Functions as a response regulator involved in His-to-Asp phosphorelay signal transduction system. Phosphorylation of the Asp residue in the receiver domain activates the ability of the protein to promote the transcription of target genes. Type-A response regulators seem to act as negative regulators of the cytokinin signaling.</text>
</comment>
<comment type="tissue specificity">
    <text evidence="4">Expressed in mature leaves, and at low levels in roots, shoots and flowers.</text>
</comment>
<comment type="induction">
    <text evidence="4">By cytokinin.</text>
</comment>
<comment type="PTM">
    <text evidence="6">Two-component system major event consists of a His-to-Asp phosphorelay between a sensor histidine kinase (HK) and a response regulator (RR). In plants, the His-to-Asp phosphorelay involves an additional intermediate named Histidine-containing phosphotransfer protein (HPt). This multistep phosphorelay consists of a His-Asp-His-Asp sequential transfer of a phosphate group between first a His and an Asp of the HK protein, followed by the transfer to a conserved His of the HPt protein and finally the transfer to an Asp in the receiver domain of the RR protein.</text>
</comment>
<comment type="similarity">
    <text evidence="6">Belongs to the ARR family. Type-A subfamily.</text>
</comment>
<sequence>MAVAIEAPFHVLAVDDSLPDRKLIERLLKTSSFQVTTVDSGSKALEFLGLHDHEDSPISTQSDQQEVGVNLIITDYCMPGMTGYDLLKKIKESSYLRDIPVVIMSSDNIPSRINRCLEEGADEFFLKPVRLSDMSKLKPHILKSRCKEHYQQEQHLQSNSESNNSSNPTSENSSSSTSTNSHKRKAVDEEILPHTIRPRHS</sequence>
<name>ORR10_ORYSI</name>
<keyword id="KW-0932">Cytokinin signaling pathway</keyword>
<keyword id="KW-0597">Phosphoprotein</keyword>
<keyword id="KW-1185">Reference proteome</keyword>
<keyword id="KW-0804">Transcription</keyword>
<keyword id="KW-0805">Transcription regulation</keyword>
<keyword id="KW-0902">Two-component regulatory system</keyword>
<protein>
    <recommendedName>
        <fullName evidence="6">Two-component response regulator ORR10</fullName>
    </recommendedName>
    <alternativeName>
        <fullName evidence="5">Type A response regulator 10</fullName>
        <shortName evidence="5">OsRR10</shortName>
    </alternativeName>
</protein>
<evidence type="ECO:0000250" key="1">
    <source>
        <dbReference type="UniProtKB" id="Q9ZWS9"/>
    </source>
</evidence>
<evidence type="ECO:0000255" key="2">
    <source>
        <dbReference type="PROSITE-ProRule" id="PRU00169"/>
    </source>
</evidence>
<evidence type="ECO:0000256" key="3">
    <source>
        <dbReference type="SAM" id="MobiDB-lite"/>
    </source>
</evidence>
<evidence type="ECO:0000269" key="4">
    <source>
    </source>
</evidence>
<evidence type="ECO:0000303" key="5">
    <source>
    </source>
</evidence>
<evidence type="ECO:0000305" key="6"/>
<evidence type="ECO:0000312" key="7">
    <source>
        <dbReference type="EMBL" id="EEC68836.1"/>
    </source>
</evidence>
<gene>
    <name evidence="6" type="primary">RR10</name>
    <name evidence="7" type="ORF">OsI_37415</name>
</gene>
<accession>B8BLZ4</accession>
<feature type="chain" id="PRO_0000433835" description="Two-component response regulator ORR10">
    <location>
        <begin position="1"/>
        <end position="201"/>
    </location>
</feature>
<feature type="domain" description="Response regulatory" evidence="2">
    <location>
        <begin position="10"/>
        <end position="142"/>
    </location>
</feature>
<feature type="region of interest" description="Disordered" evidence="3">
    <location>
        <begin position="149"/>
        <end position="201"/>
    </location>
</feature>
<feature type="compositionally biased region" description="Low complexity" evidence="3">
    <location>
        <begin position="158"/>
        <end position="180"/>
    </location>
</feature>
<feature type="modified residue" description="4-aspartylphosphate" evidence="2">
    <location>
        <position position="75"/>
    </location>
</feature>
<reference key="1">
    <citation type="journal article" date="2005" name="PLoS Biol.">
        <title>The genomes of Oryza sativa: a history of duplications.</title>
        <authorList>
            <person name="Yu J."/>
            <person name="Wang J."/>
            <person name="Lin W."/>
            <person name="Li S."/>
            <person name="Li H."/>
            <person name="Zhou J."/>
            <person name="Ni P."/>
            <person name="Dong W."/>
            <person name="Hu S."/>
            <person name="Zeng C."/>
            <person name="Zhang J."/>
            <person name="Zhang Y."/>
            <person name="Li R."/>
            <person name="Xu Z."/>
            <person name="Li S."/>
            <person name="Li X."/>
            <person name="Zheng H."/>
            <person name="Cong L."/>
            <person name="Lin L."/>
            <person name="Yin J."/>
            <person name="Geng J."/>
            <person name="Li G."/>
            <person name="Shi J."/>
            <person name="Liu J."/>
            <person name="Lv H."/>
            <person name="Li J."/>
            <person name="Wang J."/>
            <person name="Deng Y."/>
            <person name="Ran L."/>
            <person name="Shi X."/>
            <person name="Wang X."/>
            <person name="Wu Q."/>
            <person name="Li C."/>
            <person name="Ren X."/>
            <person name="Wang J."/>
            <person name="Wang X."/>
            <person name="Li D."/>
            <person name="Liu D."/>
            <person name="Zhang X."/>
            <person name="Ji Z."/>
            <person name="Zhao W."/>
            <person name="Sun Y."/>
            <person name="Zhang Z."/>
            <person name="Bao J."/>
            <person name="Han Y."/>
            <person name="Dong L."/>
            <person name="Ji J."/>
            <person name="Chen P."/>
            <person name="Wu S."/>
            <person name="Liu J."/>
            <person name="Xiao Y."/>
            <person name="Bu D."/>
            <person name="Tan J."/>
            <person name="Yang L."/>
            <person name="Ye C."/>
            <person name="Zhang J."/>
            <person name="Xu J."/>
            <person name="Zhou Y."/>
            <person name="Yu Y."/>
            <person name="Zhang B."/>
            <person name="Zhuang S."/>
            <person name="Wei H."/>
            <person name="Liu B."/>
            <person name="Lei M."/>
            <person name="Yu H."/>
            <person name="Li Y."/>
            <person name="Xu H."/>
            <person name="Wei S."/>
            <person name="He X."/>
            <person name="Fang L."/>
            <person name="Zhang Z."/>
            <person name="Zhang Y."/>
            <person name="Huang X."/>
            <person name="Su Z."/>
            <person name="Tong W."/>
            <person name="Li J."/>
            <person name="Tong Z."/>
            <person name="Li S."/>
            <person name="Ye J."/>
            <person name="Wang L."/>
            <person name="Fang L."/>
            <person name="Lei T."/>
            <person name="Chen C.-S."/>
            <person name="Chen H.-C."/>
            <person name="Xu Z."/>
            <person name="Li H."/>
            <person name="Huang H."/>
            <person name="Zhang F."/>
            <person name="Xu H."/>
            <person name="Li N."/>
            <person name="Zhao C."/>
            <person name="Li S."/>
            <person name="Dong L."/>
            <person name="Huang Y."/>
            <person name="Li L."/>
            <person name="Xi Y."/>
            <person name="Qi Q."/>
            <person name="Li W."/>
            <person name="Zhang B."/>
            <person name="Hu W."/>
            <person name="Zhang Y."/>
            <person name="Tian X."/>
            <person name="Jiao Y."/>
            <person name="Liang X."/>
            <person name="Jin J."/>
            <person name="Gao L."/>
            <person name="Zheng W."/>
            <person name="Hao B."/>
            <person name="Liu S.-M."/>
            <person name="Wang W."/>
            <person name="Yuan L."/>
            <person name="Cao M."/>
            <person name="McDermott J."/>
            <person name="Samudrala R."/>
            <person name="Wang J."/>
            <person name="Wong G.K.-S."/>
            <person name="Yang H."/>
        </authorList>
    </citation>
    <scope>NUCLEOTIDE SEQUENCE [LARGE SCALE GENOMIC DNA]</scope>
    <source>
        <strain>cv. 93-11</strain>
    </source>
</reference>
<reference key="2">
    <citation type="journal article" date="2006" name="BMC Plant Biol.">
        <title>Molecular characterization and differential expression of cytokinin-responsive type-A response regulators in rice (Oryza sativa).</title>
        <authorList>
            <person name="Jain M."/>
            <person name="Tyagi A.K."/>
            <person name="Khurana J.P."/>
        </authorList>
    </citation>
    <scope>TISSUE SPECIFICITY</scope>
    <scope>INDUCTION</scope>
    <source>
        <strain>cv. Pusa Basmati</strain>
    </source>
</reference>
<dbReference type="EMBL" id="CM000137">
    <property type="protein sequence ID" value="EEC68836.1"/>
    <property type="molecule type" value="Genomic_DNA"/>
</dbReference>
<dbReference type="SMR" id="B8BLZ4"/>
<dbReference type="STRING" id="39946.B8BLZ4"/>
<dbReference type="EnsemblPlants" id="BGIOSGA036967-TA">
    <property type="protein sequence ID" value="BGIOSGA036967-PA"/>
    <property type="gene ID" value="BGIOSGA036967"/>
</dbReference>
<dbReference type="Gramene" id="BGIOSGA036967-TA">
    <property type="protein sequence ID" value="BGIOSGA036967-PA"/>
    <property type="gene ID" value="BGIOSGA036967"/>
</dbReference>
<dbReference type="HOGENOM" id="CLU_000445_69_5_1"/>
<dbReference type="OMA" id="LEQQEPM"/>
<dbReference type="Proteomes" id="UP000007015">
    <property type="component" value="Chromosome 12"/>
</dbReference>
<dbReference type="GO" id="GO:0005634">
    <property type="term" value="C:nucleus"/>
    <property type="evidence" value="ECO:0007669"/>
    <property type="project" value="EnsemblPlants"/>
</dbReference>
<dbReference type="GO" id="GO:0009736">
    <property type="term" value="P:cytokinin-activated signaling pathway"/>
    <property type="evidence" value="ECO:0007669"/>
    <property type="project" value="UniProtKB-KW"/>
</dbReference>
<dbReference type="GO" id="GO:0000160">
    <property type="term" value="P:phosphorelay signal transduction system"/>
    <property type="evidence" value="ECO:0007669"/>
    <property type="project" value="UniProtKB-KW"/>
</dbReference>
<dbReference type="CDD" id="cd17581">
    <property type="entry name" value="REC_typeA_ARR"/>
    <property type="match status" value="1"/>
</dbReference>
<dbReference type="FunFam" id="3.40.50.2300:FF:000389">
    <property type="entry name" value="Two-component response regulator ORR9"/>
    <property type="match status" value="1"/>
</dbReference>
<dbReference type="Gene3D" id="3.40.50.2300">
    <property type="match status" value="1"/>
</dbReference>
<dbReference type="InterPro" id="IPR045279">
    <property type="entry name" value="ARR-like"/>
</dbReference>
<dbReference type="InterPro" id="IPR011006">
    <property type="entry name" value="CheY-like_superfamily"/>
</dbReference>
<dbReference type="InterPro" id="IPR001789">
    <property type="entry name" value="Sig_transdc_resp-reg_receiver"/>
</dbReference>
<dbReference type="PANTHER" id="PTHR43874">
    <property type="entry name" value="TWO-COMPONENT RESPONSE REGULATOR"/>
    <property type="match status" value="1"/>
</dbReference>
<dbReference type="PANTHER" id="PTHR43874:SF167">
    <property type="entry name" value="TWO-COMPONENT RESPONSE REGULATOR ARR9"/>
    <property type="match status" value="1"/>
</dbReference>
<dbReference type="Pfam" id="PF00072">
    <property type="entry name" value="Response_reg"/>
    <property type="match status" value="1"/>
</dbReference>
<dbReference type="SMART" id="SM00448">
    <property type="entry name" value="REC"/>
    <property type="match status" value="1"/>
</dbReference>
<dbReference type="SUPFAM" id="SSF52172">
    <property type="entry name" value="CheY-like"/>
    <property type="match status" value="1"/>
</dbReference>
<dbReference type="PROSITE" id="PS50110">
    <property type="entry name" value="RESPONSE_REGULATORY"/>
    <property type="match status" value="1"/>
</dbReference>
<proteinExistence type="evidence at transcript level"/>